<gene>
    <name evidence="1" type="primary">murI</name>
    <name type="ordered locus">HD_1906</name>
</gene>
<reference key="1">
    <citation type="submission" date="2003-06" db="EMBL/GenBank/DDBJ databases">
        <title>The complete genome sequence of Haemophilus ducreyi.</title>
        <authorList>
            <person name="Munson R.S. Jr."/>
            <person name="Ray W.C."/>
            <person name="Mahairas G."/>
            <person name="Sabo P."/>
            <person name="Mungur R."/>
            <person name="Johnson L."/>
            <person name="Nguyen D."/>
            <person name="Wang J."/>
            <person name="Forst C."/>
            <person name="Hood L."/>
        </authorList>
    </citation>
    <scope>NUCLEOTIDE SEQUENCE [LARGE SCALE GENOMIC DNA]</scope>
    <source>
        <strain>35000HP / ATCC 700724</strain>
    </source>
</reference>
<evidence type="ECO:0000255" key="1">
    <source>
        <dbReference type="HAMAP-Rule" id="MF_00258"/>
    </source>
</evidence>
<name>MURI_HAEDU</name>
<organism>
    <name type="scientific">Haemophilus ducreyi (strain 35000HP / ATCC 700724)</name>
    <dbReference type="NCBI Taxonomy" id="233412"/>
    <lineage>
        <taxon>Bacteria</taxon>
        <taxon>Pseudomonadati</taxon>
        <taxon>Pseudomonadota</taxon>
        <taxon>Gammaproteobacteria</taxon>
        <taxon>Pasteurellales</taxon>
        <taxon>Pasteurellaceae</taxon>
        <taxon>Haemophilus</taxon>
    </lineage>
</organism>
<feature type="chain" id="PRO_0000095474" description="Glutamate racemase">
    <location>
        <begin position="1"/>
        <end position="265"/>
    </location>
</feature>
<feature type="active site" description="Proton donor/acceptor" evidence="1">
    <location>
        <position position="73"/>
    </location>
</feature>
<feature type="active site" description="Proton donor/acceptor" evidence="1">
    <location>
        <position position="184"/>
    </location>
</feature>
<feature type="binding site" evidence="1">
    <location>
        <begin position="9"/>
        <end position="10"/>
    </location>
    <ligand>
        <name>substrate</name>
    </ligand>
</feature>
<feature type="binding site" evidence="1">
    <location>
        <begin position="41"/>
        <end position="42"/>
    </location>
    <ligand>
        <name>substrate</name>
    </ligand>
</feature>
<feature type="binding site" evidence="1">
    <location>
        <begin position="74"/>
        <end position="75"/>
    </location>
    <ligand>
        <name>substrate</name>
    </ligand>
</feature>
<feature type="binding site" evidence="1">
    <location>
        <begin position="185"/>
        <end position="186"/>
    </location>
    <ligand>
        <name>substrate</name>
    </ligand>
</feature>
<dbReference type="EC" id="5.1.1.3" evidence="1"/>
<dbReference type="EMBL" id="AE017143">
    <property type="protein sequence ID" value="AAP96634.1"/>
    <property type="molecule type" value="Genomic_DNA"/>
</dbReference>
<dbReference type="RefSeq" id="WP_010945662.1">
    <property type="nucleotide sequence ID" value="NC_002940.2"/>
</dbReference>
<dbReference type="SMR" id="Q7VKJ3"/>
<dbReference type="STRING" id="233412.HD_1906"/>
<dbReference type="KEGG" id="hdu:HD_1906"/>
<dbReference type="eggNOG" id="COG0796">
    <property type="taxonomic scope" value="Bacteria"/>
</dbReference>
<dbReference type="HOGENOM" id="CLU_052344_2_0_6"/>
<dbReference type="OrthoDB" id="9801055at2"/>
<dbReference type="UniPathway" id="UPA00219"/>
<dbReference type="Proteomes" id="UP000001022">
    <property type="component" value="Chromosome"/>
</dbReference>
<dbReference type="GO" id="GO:0008881">
    <property type="term" value="F:glutamate racemase activity"/>
    <property type="evidence" value="ECO:0007669"/>
    <property type="project" value="UniProtKB-UniRule"/>
</dbReference>
<dbReference type="GO" id="GO:0071555">
    <property type="term" value="P:cell wall organization"/>
    <property type="evidence" value="ECO:0007669"/>
    <property type="project" value="UniProtKB-KW"/>
</dbReference>
<dbReference type="GO" id="GO:0009252">
    <property type="term" value="P:peptidoglycan biosynthetic process"/>
    <property type="evidence" value="ECO:0007669"/>
    <property type="project" value="UniProtKB-UniRule"/>
</dbReference>
<dbReference type="GO" id="GO:0008360">
    <property type="term" value="P:regulation of cell shape"/>
    <property type="evidence" value="ECO:0007669"/>
    <property type="project" value="UniProtKB-KW"/>
</dbReference>
<dbReference type="Gene3D" id="3.40.50.1860">
    <property type="match status" value="2"/>
</dbReference>
<dbReference type="HAMAP" id="MF_00258">
    <property type="entry name" value="Glu_racemase"/>
    <property type="match status" value="1"/>
</dbReference>
<dbReference type="InterPro" id="IPR015942">
    <property type="entry name" value="Asp/Glu/hydantoin_racemase"/>
</dbReference>
<dbReference type="InterPro" id="IPR001920">
    <property type="entry name" value="Asp/Glu_race"/>
</dbReference>
<dbReference type="InterPro" id="IPR018187">
    <property type="entry name" value="Asp/Glu_racemase_AS_1"/>
</dbReference>
<dbReference type="InterPro" id="IPR004391">
    <property type="entry name" value="Glu_race"/>
</dbReference>
<dbReference type="NCBIfam" id="TIGR00067">
    <property type="entry name" value="glut_race"/>
    <property type="match status" value="1"/>
</dbReference>
<dbReference type="PANTHER" id="PTHR21198">
    <property type="entry name" value="GLUTAMATE RACEMASE"/>
    <property type="match status" value="1"/>
</dbReference>
<dbReference type="PANTHER" id="PTHR21198:SF2">
    <property type="entry name" value="GLUTAMATE RACEMASE"/>
    <property type="match status" value="1"/>
</dbReference>
<dbReference type="Pfam" id="PF01177">
    <property type="entry name" value="Asp_Glu_race"/>
    <property type="match status" value="1"/>
</dbReference>
<dbReference type="SUPFAM" id="SSF53681">
    <property type="entry name" value="Aspartate/glutamate racemase"/>
    <property type="match status" value="2"/>
</dbReference>
<dbReference type="PROSITE" id="PS00923">
    <property type="entry name" value="ASP_GLU_RACEMASE_1"/>
    <property type="match status" value="1"/>
</dbReference>
<accession>Q7VKJ3</accession>
<comment type="function">
    <text evidence="1">Provides the (R)-glutamate required for cell wall biosynthesis.</text>
</comment>
<comment type="catalytic activity">
    <reaction evidence="1">
        <text>L-glutamate = D-glutamate</text>
        <dbReference type="Rhea" id="RHEA:12813"/>
        <dbReference type="ChEBI" id="CHEBI:29985"/>
        <dbReference type="ChEBI" id="CHEBI:29986"/>
        <dbReference type="EC" id="5.1.1.3"/>
    </reaction>
</comment>
<comment type="pathway">
    <text evidence="1">Cell wall biogenesis; peptidoglycan biosynthesis.</text>
</comment>
<comment type="similarity">
    <text evidence="1">Belongs to the aspartate/glutamate racemases family.</text>
</comment>
<proteinExistence type="inferred from homology"/>
<sequence length="265" mass="29843">MKPTILLYDSGMGGLTVYDEIRKKLPNAHYLYYFDNACFPYSEKPTEVLVERATKMVQKMAKNYPLDLVVVACNTASTVVLPTLRKIFPFPIVGTVPAIKPAAALSQTKTIGLLATKGTITRPYVLSLIEQYAPNCQIEKIGSTALVELVEQKLQTGVIDLTRLTPIIADWQNHPTLDTVILGCTHFPMAKTELQQLLPNVKYFLDSGNAIANRVTHLIMHSPHNQQLEKQRENLAFCTQQNNQFKQQAKIMQRWGFPQLNTLMI</sequence>
<keyword id="KW-0133">Cell shape</keyword>
<keyword id="KW-0961">Cell wall biogenesis/degradation</keyword>
<keyword id="KW-0413">Isomerase</keyword>
<keyword id="KW-0573">Peptidoglycan synthesis</keyword>
<keyword id="KW-1185">Reference proteome</keyword>
<protein>
    <recommendedName>
        <fullName evidence="1">Glutamate racemase</fullName>
        <ecNumber evidence="1">5.1.1.3</ecNumber>
    </recommendedName>
</protein>